<evidence type="ECO:0000250" key="1"/>
<evidence type="ECO:0000250" key="2">
    <source>
        <dbReference type="UniProtKB" id="Q8IWT0"/>
    </source>
</evidence>
<evidence type="ECO:0000305" key="3"/>
<evidence type="ECO:0000312" key="4">
    <source>
        <dbReference type="WormBase" id="C43H8.1"/>
    </source>
</evidence>
<proteinExistence type="inferred from homology"/>
<accession>Q9TZN1</accession>
<protein>
    <recommendedName>
        <fullName>Protein archease-like</fullName>
    </recommendedName>
</protein>
<name>ARCH_CAEEL</name>
<dbReference type="EMBL" id="FO080221">
    <property type="protein sequence ID" value="CCD62130.1"/>
    <property type="molecule type" value="Genomic_DNA"/>
</dbReference>
<dbReference type="PIR" id="T33468">
    <property type="entry name" value="T33468"/>
</dbReference>
<dbReference type="RefSeq" id="NP_492778.1">
    <property type="nucleotide sequence ID" value="NM_060377.7"/>
</dbReference>
<dbReference type="SMR" id="Q9TZN1"/>
<dbReference type="BioGRID" id="48254">
    <property type="interactions" value="1"/>
</dbReference>
<dbReference type="FunCoup" id="Q9TZN1">
    <property type="interactions" value="964"/>
</dbReference>
<dbReference type="STRING" id="6239.C43H8.1.1"/>
<dbReference type="PaxDb" id="6239-C43H8.1"/>
<dbReference type="PeptideAtlas" id="Q9TZN1"/>
<dbReference type="EnsemblMetazoa" id="C43H8.1.1">
    <property type="protein sequence ID" value="C43H8.1.1"/>
    <property type="gene ID" value="WBGene00016621"/>
</dbReference>
<dbReference type="GeneID" id="183428"/>
<dbReference type="KEGG" id="cel:CELE_C43H8.1"/>
<dbReference type="UCSC" id="C43H8.1">
    <property type="organism name" value="c. elegans"/>
</dbReference>
<dbReference type="AGR" id="WB:WBGene00016621"/>
<dbReference type="CTD" id="183428"/>
<dbReference type="WormBase" id="C43H8.1">
    <property type="protein sequence ID" value="CE19377"/>
    <property type="gene ID" value="WBGene00016621"/>
    <property type="gene designation" value="arch-1"/>
</dbReference>
<dbReference type="eggNOG" id="KOG4528">
    <property type="taxonomic scope" value="Eukaryota"/>
</dbReference>
<dbReference type="GeneTree" id="ENSGT00390000003245"/>
<dbReference type="HOGENOM" id="CLU_111362_0_1_1"/>
<dbReference type="InParanoid" id="Q9TZN1"/>
<dbReference type="OMA" id="AITYHKM"/>
<dbReference type="OrthoDB" id="2190767at2759"/>
<dbReference type="PhylomeDB" id="Q9TZN1"/>
<dbReference type="PRO" id="PR:Q9TZN1"/>
<dbReference type="Proteomes" id="UP000001940">
    <property type="component" value="Chromosome I"/>
</dbReference>
<dbReference type="Bgee" id="WBGene00016621">
    <property type="expression patterns" value="Expressed in larva and 4 other cell types or tissues"/>
</dbReference>
<dbReference type="GO" id="GO:0072669">
    <property type="term" value="C:tRNA-splicing ligase complex"/>
    <property type="evidence" value="ECO:0000318"/>
    <property type="project" value="GO_Central"/>
</dbReference>
<dbReference type="GO" id="GO:0046872">
    <property type="term" value="F:metal ion binding"/>
    <property type="evidence" value="ECO:0007669"/>
    <property type="project" value="UniProtKB-KW"/>
</dbReference>
<dbReference type="GO" id="GO:0006388">
    <property type="term" value="P:tRNA splicing, via endonucleolytic cleavage and ligation"/>
    <property type="evidence" value="ECO:0000318"/>
    <property type="project" value="GO_Central"/>
</dbReference>
<dbReference type="FunFam" id="3.55.10.10:FF:000002">
    <property type="entry name" value="Archease, putative"/>
    <property type="match status" value="1"/>
</dbReference>
<dbReference type="Gene3D" id="3.55.10.10">
    <property type="entry name" value="Archease domain"/>
    <property type="match status" value="1"/>
</dbReference>
<dbReference type="InterPro" id="IPR002804">
    <property type="entry name" value="Archease"/>
</dbReference>
<dbReference type="InterPro" id="IPR023572">
    <property type="entry name" value="Archease_dom"/>
</dbReference>
<dbReference type="InterPro" id="IPR036820">
    <property type="entry name" value="Archease_dom_sf"/>
</dbReference>
<dbReference type="PANTHER" id="PTHR12682">
    <property type="entry name" value="ARCHEASE"/>
    <property type="match status" value="1"/>
</dbReference>
<dbReference type="PANTHER" id="PTHR12682:SF11">
    <property type="entry name" value="PROTEIN ARCHEASE"/>
    <property type="match status" value="1"/>
</dbReference>
<dbReference type="Pfam" id="PF01951">
    <property type="entry name" value="Archease"/>
    <property type="match status" value="1"/>
</dbReference>
<dbReference type="SUPFAM" id="SSF69819">
    <property type="entry name" value="MTH1598-like"/>
    <property type="match status" value="1"/>
</dbReference>
<comment type="function">
    <text evidence="2">Component of the tRNA-splicing ligase complex required to facilitate the enzymatic turnover of catalytic subunit RtcB (F16A11.2).</text>
</comment>
<comment type="similarity">
    <text evidence="3">Belongs to the archease family.</text>
</comment>
<sequence>MPSTSMIEDRSEIERRRFEYLDHPADIQLHSWGSTMEEAFEACLVSMFGYMTDLAKVDEMYEFYWKASGDSLDGLLFQFLDEALNSFHAEPCFVAKRVEILRFDKKKFEIEFRGWGESFDTSKHETEADIKSPTYSNMQINEKPERCDIYVIVDI</sequence>
<feature type="chain" id="PRO_0000285955" description="Protein archease-like">
    <location>
        <begin position="1"/>
        <end position="155"/>
    </location>
</feature>
<feature type="binding site" evidence="1">
    <location>
        <position position="26"/>
    </location>
    <ligand>
        <name>Ca(2+)</name>
        <dbReference type="ChEBI" id="CHEBI:29108"/>
    </ligand>
</feature>
<feature type="binding site" evidence="1">
    <location>
        <position position="154"/>
    </location>
    <ligand>
        <name>Ca(2+)</name>
        <dbReference type="ChEBI" id="CHEBI:29108"/>
    </ligand>
</feature>
<feature type="binding site" evidence="1">
    <location>
        <position position="155"/>
    </location>
    <ligand>
        <name>Ca(2+)</name>
        <dbReference type="ChEBI" id="CHEBI:29108"/>
    </ligand>
</feature>
<gene>
    <name evidence="4" type="primary">arch-1</name>
    <name evidence="4" type="ORF">C43H8.1</name>
</gene>
<reference key="1">
    <citation type="journal article" date="1998" name="Science">
        <title>Genome sequence of the nematode C. elegans: a platform for investigating biology.</title>
        <authorList>
            <consortium name="The C. elegans sequencing consortium"/>
        </authorList>
    </citation>
    <scope>NUCLEOTIDE SEQUENCE [LARGE SCALE GENOMIC DNA]</scope>
    <source>
        <strain>Bristol N2</strain>
    </source>
</reference>
<keyword id="KW-0106">Calcium</keyword>
<keyword id="KW-0479">Metal-binding</keyword>
<keyword id="KW-1185">Reference proteome</keyword>
<keyword id="KW-0819">tRNA processing</keyword>
<organism>
    <name type="scientific">Caenorhabditis elegans</name>
    <dbReference type="NCBI Taxonomy" id="6239"/>
    <lineage>
        <taxon>Eukaryota</taxon>
        <taxon>Metazoa</taxon>
        <taxon>Ecdysozoa</taxon>
        <taxon>Nematoda</taxon>
        <taxon>Chromadorea</taxon>
        <taxon>Rhabditida</taxon>
        <taxon>Rhabditina</taxon>
        <taxon>Rhabditomorpha</taxon>
        <taxon>Rhabditoidea</taxon>
        <taxon>Rhabditidae</taxon>
        <taxon>Peloderinae</taxon>
        <taxon>Caenorhabditis</taxon>
    </lineage>
</organism>